<keyword id="KW-0004">4Fe-4S</keyword>
<keyword id="KW-0408">Iron</keyword>
<keyword id="KW-0411">Iron-sulfur</keyword>
<keyword id="KW-0479">Metal-binding</keyword>
<keyword id="KW-0489">Methyltransferase</keyword>
<keyword id="KW-0949">S-adenosyl-L-methionine</keyword>
<keyword id="KW-0808">Transferase</keyword>
<feature type="chain" id="PRO_0000162017" description="Uncharacterized RNA methyltransferase SA1713">
    <location>
        <begin position="1"/>
        <end position="453"/>
    </location>
</feature>
<feature type="active site" description="Nucleophile" evidence="2">
    <location>
        <position position="411"/>
    </location>
</feature>
<feature type="binding site" evidence="1">
    <location>
        <position position="74"/>
    </location>
    <ligand>
        <name>[4Fe-4S] cluster</name>
        <dbReference type="ChEBI" id="CHEBI:49883"/>
    </ligand>
</feature>
<feature type="binding site" evidence="1">
    <location>
        <position position="80"/>
    </location>
    <ligand>
        <name>[4Fe-4S] cluster</name>
        <dbReference type="ChEBI" id="CHEBI:49883"/>
    </ligand>
</feature>
<feature type="binding site" evidence="1">
    <location>
        <position position="83"/>
    </location>
    <ligand>
        <name>[4Fe-4S] cluster</name>
        <dbReference type="ChEBI" id="CHEBI:49883"/>
    </ligand>
</feature>
<feature type="binding site" evidence="1">
    <location>
        <position position="162"/>
    </location>
    <ligand>
        <name>[4Fe-4S] cluster</name>
        <dbReference type="ChEBI" id="CHEBI:49883"/>
    </ligand>
</feature>
<feature type="binding site" evidence="2">
    <location>
        <position position="286"/>
    </location>
    <ligand>
        <name>S-adenosyl-L-methionine</name>
        <dbReference type="ChEBI" id="CHEBI:59789"/>
    </ligand>
</feature>
<feature type="binding site" evidence="2">
    <location>
        <position position="315"/>
    </location>
    <ligand>
        <name>S-adenosyl-L-methionine</name>
        <dbReference type="ChEBI" id="CHEBI:59789"/>
    </ligand>
</feature>
<feature type="binding site" evidence="2">
    <location>
        <position position="336"/>
    </location>
    <ligand>
        <name>S-adenosyl-L-methionine</name>
        <dbReference type="ChEBI" id="CHEBI:59789"/>
    </ligand>
</feature>
<feature type="binding site" evidence="2">
    <location>
        <position position="384"/>
    </location>
    <ligand>
        <name>S-adenosyl-L-methionine</name>
        <dbReference type="ChEBI" id="CHEBI:59789"/>
    </ligand>
</feature>
<accession>Q7A4Q9</accession>
<name>Y1713_STAAN</name>
<gene>
    <name type="ordered locus">SA1713</name>
</gene>
<dbReference type="EC" id="2.1.1.-"/>
<dbReference type="EMBL" id="BA000018">
    <property type="protein sequence ID" value="BAB42983.1"/>
    <property type="molecule type" value="Genomic_DNA"/>
</dbReference>
<dbReference type="PIR" id="H89977">
    <property type="entry name" value="H89977"/>
</dbReference>
<dbReference type="SMR" id="Q7A4Q9"/>
<dbReference type="EnsemblBacteria" id="BAB42983">
    <property type="protein sequence ID" value="BAB42983"/>
    <property type="gene ID" value="BAB42983"/>
</dbReference>
<dbReference type="KEGG" id="sau:SA1713"/>
<dbReference type="HOGENOM" id="CLU_014689_7_0_9"/>
<dbReference type="GO" id="GO:0051539">
    <property type="term" value="F:4 iron, 4 sulfur cluster binding"/>
    <property type="evidence" value="ECO:0007669"/>
    <property type="project" value="UniProtKB-KW"/>
</dbReference>
<dbReference type="GO" id="GO:0046872">
    <property type="term" value="F:metal ion binding"/>
    <property type="evidence" value="ECO:0007669"/>
    <property type="project" value="UniProtKB-KW"/>
</dbReference>
<dbReference type="GO" id="GO:0070041">
    <property type="term" value="F:rRNA (uridine-C5-)-methyltransferase activity"/>
    <property type="evidence" value="ECO:0007669"/>
    <property type="project" value="TreeGrafter"/>
</dbReference>
<dbReference type="GO" id="GO:0070475">
    <property type="term" value="P:rRNA base methylation"/>
    <property type="evidence" value="ECO:0007669"/>
    <property type="project" value="TreeGrafter"/>
</dbReference>
<dbReference type="CDD" id="cd02440">
    <property type="entry name" value="AdoMet_MTases"/>
    <property type="match status" value="1"/>
</dbReference>
<dbReference type="FunFam" id="3.40.50.150:FF:000009">
    <property type="entry name" value="23S rRNA (Uracil(1939)-C(5))-methyltransferase RlmD"/>
    <property type="match status" value="1"/>
</dbReference>
<dbReference type="FunFam" id="2.40.50.140:FF:000097">
    <property type="entry name" value="23S rRNA (uracil(1939)-C(5))-methyltransferase RlmD"/>
    <property type="match status" value="1"/>
</dbReference>
<dbReference type="FunFam" id="2.40.50.1070:FF:000003">
    <property type="entry name" value="23S rRNA (Uracil-5-)-methyltransferase RumA"/>
    <property type="match status" value="1"/>
</dbReference>
<dbReference type="Gene3D" id="2.40.50.1070">
    <property type="match status" value="1"/>
</dbReference>
<dbReference type="Gene3D" id="2.40.50.140">
    <property type="entry name" value="Nucleic acid-binding proteins"/>
    <property type="match status" value="1"/>
</dbReference>
<dbReference type="Gene3D" id="3.40.50.150">
    <property type="entry name" value="Vaccinia Virus protein VP39"/>
    <property type="match status" value="1"/>
</dbReference>
<dbReference type="InterPro" id="IPR030390">
    <property type="entry name" value="MeTrfase_TrmA_AS"/>
</dbReference>
<dbReference type="InterPro" id="IPR030391">
    <property type="entry name" value="MeTrfase_TrmA_CS"/>
</dbReference>
<dbReference type="InterPro" id="IPR012340">
    <property type="entry name" value="NA-bd_OB-fold"/>
</dbReference>
<dbReference type="InterPro" id="IPR029063">
    <property type="entry name" value="SAM-dependent_MTases_sf"/>
</dbReference>
<dbReference type="InterPro" id="IPR010280">
    <property type="entry name" value="U5_MeTrfase_fam"/>
</dbReference>
<dbReference type="NCBIfam" id="TIGR00479">
    <property type="entry name" value="rumA"/>
    <property type="match status" value="1"/>
</dbReference>
<dbReference type="PANTHER" id="PTHR11061">
    <property type="entry name" value="RNA M5U METHYLTRANSFERASE"/>
    <property type="match status" value="1"/>
</dbReference>
<dbReference type="PANTHER" id="PTHR11061:SF30">
    <property type="entry name" value="TRNA (URACIL(54)-C(5))-METHYLTRANSFERASE"/>
    <property type="match status" value="1"/>
</dbReference>
<dbReference type="Pfam" id="PF05958">
    <property type="entry name" value="tRNA_U5-meth_tr"/>
    <property type="match status" value="1"/>
</dbReference>
<dbReference type="SUPFAM" id="SSF50249">
    <property type="entry name" value="Nucleic acid-binding proteins"/>
    <property type="match status" value="1"/>
</dbReference>
<dbReference type="SUPFAM" id="SSF53335">
    <property type="entry name" value="S-adenosyl-L-methionine-dependent methyltransferases"/>
    <property type="match status" value="1"/>
</dbReference>
<dbReference type="PROSITE" id="PS51687">
    <property type="entry name" value="SAM_MT_RNA_M5U"/>
    <property type="match status" value="1"/>
</dbReference>
<dbReference type="PROSITE" id="PS01230">
    <property type="entry name" value="TRMA_1"/>
    <property type="match status" value="1"/>
</dbReference>
<dbReference type="PROSITE" id="PS01231">
    <property type="entry name" value="TRMA_2"/>
    <property type="match status" value="1"/>
</dbReference>
<evidence type="ECO:0000250" key="1"/>
<evidence type="ECO:0000255" key="2">
    <source>
        <dbReference type="PROSITE-ProRule" id="PRU01024"/>
    </source>
</evidence>
<protein>
    <recommendedName>
        <fullName>Uncharacterized RNA methyltransferase SA1713</fullName>
        <ecNumber>2.1.1.-</ecNumber>
    </recommendedName>
</protein>
<sequence length="453" mass="51722">MQAIAKNDIKTGTVVDLTHEGHGVVKIDRFPIFIPQALINEQIEYKIIKVKKNFAIGKLLNINTRSENRVAPPCIYYERCGGCQLQHLSYEAQLEMKKEQVINLFQRKAHFDNSKINDTVGMTDPWRYRNKSQIPVGKNEQNEVIMGFYRQRSHDIIDMESCLIQDSQHQEVMNEVKSILKDLNVSIYQEQLKKGLMRHLVVRTGYHTDEMMIIFVTNGKKWPQKNAVVEKILDAFPNVTSIKQNINDSHSNVIMGRQSITLYGKDTIIDQLTDSTFKISDQSFYQINSEQTEKLYNKAIEYAQLTGNEVVLDTYCGIGTIGLYMAPHAKHVYGVEVVPSSIEDAQQNATINQCNNTTFVCGKAEEVILQWKAQGIKPDVVMVDPPRKGCDETFIQTLLTLEPKRIVYISCNPATQQRDALLLAEKYQLEEVTPVDMFPQTTHVETVALFNLK</sequence>
<organism>
    <name type="scientific">Staphylococcus aureus (strain N315)</name>
    <dbReference type="NCBI Taxonomy" id="158879"/>
    <lineage>
        <taxon>Bacteria</taxon>
        <taxon>Bacillati</taxon>
        <taxon>Bacillota</taxon>
        <taxon>Bacilli</taxon>
        <taxon>Bacillales</taxon>
        <taxon>Staphylococcaceae</taxon>
        <taxon>Staphylococcus</taxon>
    </lineage>
</organism>
<reference key="1">
    <citation type="journal article" date="2001" name="Lancet">
        <title>Whole genome sequencing of meticillin-resistant Staphylococcus aureus.</title>
        <authorList>
            <person name="Kuroda M."/>
            <person name="Ohta T."/>
            <person name="Uchiyama I."/>
            <person name="Baba T."/>
            <person name="Yuzawa H."/>
            <person name="Kobayashi I."/>
            <person name="Cui L."/>
            <person name="Oguchi A."/>
            <person name="Aoki K."/>
            <person name="Nagai Y."/>
            <person name="Lian J.-Q."/>
            <person name="Ito T."/>
            <person name="Kanamori M."/>
            <person name="Matsumaru H."/>
            <person name="Maruyama A."/>
            <person name="Murakami H."/>
            <person name="Hosoyama A."/>
            <person name="Mizutani-Ui Y."/>
            <person name="Takahashi N.K."/>
            <person name="Sawano T."/>
            <person name="Inoue R."/>
            <person name="Kaito C."/>
            <person name="Sekimizu K."/>
            <person name="Hirakawa H."/>
            <person name="Kuhara S."/>
            <person name="Goto S."/>
            <person name="Yabuzaki J."/>
            <person name="Kanehisa M."/>
            <person name="Yamashita A."/>
            <person name="Oshima K."/>
            <person name="Furuya K."/>
            <person name="Yoshino C."/>
            <person name="Shiba T."/>
            <person name="Hattori M."/>
            <person name="Ogasawara N."/>
            <person name="Hayashi H."/>
            <person name="Hiramatsu K."/>
        </authorList>
    </citation>
    <scope>NUCLEOTIDE SEQUENCE [LARGE SCALE GENOMIC DNA]</scope>
    <source>
        <strain>N315</strain>
    </source>
</reference>
<proteinExistence type="inferred from homology"/>
<comment type="similarity">
    <text evidence="2">Belongs to the class I-like SAM-binding methyltransferase superfamily. RNA M5U methyltransferase family.</text>
</comment>